<accession>P09298</accession>
<comment type="function">
    <text evidence="1">Envelope glycoprotein important for virion assembly and egress. Plays a role in the correct incorporation of gH-gL into virion membrane. Directs the glycoprotein N (gN) to the host trans-Golgi network.</text>
</comment>
<comment type="subunit">
    <text evidence="1">Interacts (via N-terminus) with gN (via N-terminus). The gM-gN heterodimer forms the gCII complex.</text>
</comment>
<comment type="subcellular location">
    <subcellularLocation>
        <location evidence="1">Virion membrane</location>
        <topology evidence="1">Multi-pass membrane protein</topology>
    </subcellularLocation>
    <subcellularLocation>
        <location evidence="1">Host Golgi apparatus</location>
        <location evidence="1">Host trans-Golgi network</location>
    </subcellularLocation>
    <subcellularLocation>
        <location evidence="1">Host endosome membrane</location>
        <topology evidence="1">Multi-pass membrane protein</topology>
    </subcellularLocation>
    <subcellularLocation>
        <location evidence="1">Host nucleus inner membrane</location>
        <topology evidence="1">Multi-pass membrane protein</topology>
    </subcellularLocation>
    <text evidence="1">During virion morphogenesis, this protein accumulates in the trans-Golgi network where secondary envelopment occurs.</text>
</comment>
<comment type="similarity">
    <text evidence="1">Belongs to the herpesviridae glycoprotein M family.</text>
</comment>
<reference key="1">
    <citation type="journal article" date="1986" name="J. Gen. Virol.">
        <title>The complete DNA sequence of varicella-zoster virus.</title>
        <authorList>
            <person name="Davison A.J."/>
            <person name="Scott J.E."/>
        </authorList>
    </citation>
    <scope>NUCLEOTIDE SEQUENCE [LARGE SCALE GENOMIC DNA]</scope>
</reference>
<dbReference type="EMBL" id="X04370">
    <property type="protein sequence ID" value="CAA27934.1"/>
    <property type="molecule type" value="Genomic_DNA"/>
</dbReference>
<dbReference type="PIR" id="F27344">
    <property type="entry name" value="WZBE50"/>
</dbReference>
<dbReference type="SMR" id="P09298"/>
<dbReference type="Proteomes" id="UP000002602">
    <property type="component" value="Genome"/>
</dbReference>
<dbReference type="GO" id="GO:0044175">
    <property type="term" value="C:host cell endosome membrane"/>
    <property type="evidence" value="ECO:0007669"/>
    <property type="project" value="UniProtKB-SubCell"/>
</dbReference>
<dbReference type="GO" id="GO:0044177">
    <property type="term" value="C:host cell Golgi apparatus"/>
    <property type="evidence" value="ECO:0007669"/>
    <property type="project" value="UniProtKB-SubCell"/>
</dbReference>
<dbReference type="GO" id="GO:0044201">
    <property type="term" value="C:host cell nuclear inner membrane"/>
    <property type="evidence" value="ECO:0007669"/>
    <property type="project" value="UniProtKB-SubCell"/>
</dbReference>
<dbReference type="GO" id="GO:0016020">
    <property type="term" value="C:membrane"/>
    <property type="evidence" value="ECO:0007669"/>
    <property type="project" value="UniProtKB-KW"/>
</dbReference>
<dbReference type="GO" id="GO:0019031">
    <property type="term" value="C:viral envelope"/>
    <property type="evidence" value="ECO:0007669"/>
    <property type="project" value="UniProtKB-KW"/>
</dbReference>
<dbReference type="GO" id="GO:0055036">
    <property type="term" value="C:virion membrane"/>
    <property type="evidence" value="ECO:0007669"/>
    <property type="project" value="UniProtKB-SubCell"/>
</dbReference>
<dbReference type="HAMAP" id="MF_04035">
    <property type="entry name" value="HSV_GM"/>
    <property type="match status" value="1"/>
</dbReference>
<dbReference type="InterPro" id="IPR000785">
    <property type="entry name" value="Herpes_glycop_M"/>
</dbReference>
<dbReference type="Pfam" id="PF01528">
    <property type="entry name" value="Herpes_glycop"/>
    <property type="match status" value="1"/>
</dbReference>
<dbReference type="PRINTS" id="PR00333">
    <property type="entry name" value="HSVINTEGRLMP"/>
</dbReference>
<evidence type="ECO:0000255" key="1">
    <source>
        <dbReference type="HAMAP-Rule" id="MF_04035"/>
    </source>
</evidence>
<name>GM_VZVD</name>
<feature type="chain" id="PRO_0000115782" description="Envelope glycoprotein M">
    <location>
        <begin position="1"/>
        <end position="435"/>
    </location>
</feature>
<feature type="topological domain" description="Intravirion" evidence="1">
    <location>
        <begin position="1"/>
        <end position="36"/>
    </location>
</feature>
<feature type="transmembrane region" description="Helical" evidence="1">
    <location>
        <begin position="37"/>
        <end position="57"/>
    </location>
</feature>
<feature type="topological domain" description="Virion surface" evidence="1">
    <location>
        <begin position="58"/>
        <end position="111"/>
    </location>
</feature>
<feature type="transmembrane region" description="Helical" evidence="1">
    <location>
        <begin position="112"/>
        <end position="132"/>
    </location>
</feature>
<feature type="topological domain" description="Intravirion" evidence="1">
    <location>
        <begin position="133"/>
        <end position="155"/>
    </location>
</feature>
<feature type="transmembrane region" description="Helical" evidence="1">
    <location>
        <begin position="156"/>
        <end position="176"/>
    </location>
</feature>
<feature type="topological domain" description="Virion surface" evidence="1">
    <location>
        <begin position="177"/>
        <end position="178"/>
    </location>
</feature>
<feature type="transmembrane region" description="Helical" evidence="1">
    <location>
        <begin position="179"/>
        <end position="199"/>
    </location>
</feature>
<feature type="topological domain" description="Intravirion" evidence="1">
    <location>
        <begin position="200"/>
        <end position="233"/>
    </location>
</feature>
<feature type="transmembrane region" description="Helical" evidence="1">
    <location>
        <begin position="234"/>
        <end position="254"/>
    </location>
</feature>
<feature type="topological domain" description="Virion surface" evidence="1">
    <location>
        <begin position="255"/>
        <end position="265"/>
    </location>
</feature>
<feature type="transmembrane region" description="Helical" evidence="1">
    <location>
        <begin position="266"/>
        <end position="288"/>
    </location>
</feature>
<feature type="topological domain" description="Intravirion" evidence="1">
    <location>
        <begin position="289"/>
        <end position="294"/>
    </location>
</feature>
<feature type="transmembrane region" description="Helical" evidence="1">
    <location>
        <begin position="295"/>
        <end position="317"/>
    </location>
</feature>
<feature type="topological domain" description="Virion surface" evidence="1">
    <location>
        <begin position="318"/>
        <end position="334"/>
    </location>
</feature>
<feature type="transmembrane region" description="Helical" evidence="1">
    <location>
        <begin position="335"/>
        <end position="355"/>
    </location>
</feature>
<feature type="topological domain" description="Intravirion" evidence="1">
    <location>
        <begin position="356"/>
        <end position="435"/>
    </location>
</feature>
<feature type="disulfide bond" description="Interchain (with gN)" evidence="1">
    <location>
        <position position="68"/>
    </location>
</feature>
<sequence length="435" mass="48672">MGTQKKGPRSEKVSPYDTTTPEVEALDHQMDTLNWRIWIIQVMMFTLGAVMLLATLIAASSEYTGIPCFYAAVVDYELFNATLDGGVWSGNRGGYSAPVLFLEPHSVVAFTYYTALTAMAMAVYTLITAAIIHRETKNQRVRQSSGVAWLVVDPTTLFWGLLSLWLLNAVVLLLAYKQIGVAATLYLGHFATSVIFTTYFCGRGKLDETNIKAVANLRQQSVFLYRLAGPTRAVFVNLMAALMAICILFVSLMLELVVANHLHTGLWSSVSVAMSTFSTLSVVYLIVSELILAHYIHVLIGPSLGTLVACATLGTAAHSYMDRLYDPISVQSPRLIPTTRGTLACLAVFSVVMLLLRLMRAYVYHRQKRSRFYGAVRRVPERVRGYIRKVKPAHRNSRRTNYPSQGYGYVYENDSTYETDREDELLYERSNSGWE</sequence>
<gene>
    <name evidence="1" type="primary">gM</name>
    <name type="ORF">ORF50</name>
</gene>
<organismHost>
    <name type="scientific">Homo sapiens</name>
    <name type="common">Human</name>
    <dbReference type="NCBI Taxonomy" id="9606"/>
</organismHost>
<proteinExistence type="inferred from homology"/>
<organism>
    <name type="scientific">Varicella-zoster virus (strain Dumas)</name>
    <name type="common">HHV-3</name>
    <name type="synonym">Human herpesvirus 3</name>
    <dbReference type="NCBI Taxonomy" id="10338"/>
    <lineage>
        <taxon>Viruses</taxon>
        <taxon>Duplodnaviria</taxon>
        <taxon>Heunggongvirae</taxon>
        <taxon>Peploviricota</taxon>
        <taxon>Herviviricetes</taxon>
        <taxon>Herpesvirales</taxon>
        <taxon>Orthoherpesviridae</taxon>
        <taxon>Alphaherpesvirinae</taxon>
        <taxon>Varicellovirus</taxon>
        <taxon>Varicellovirus humanalpha3</taxon>
        <taxon>Human herpesvirus 3</taxon>
    </lineage>
</organism>
<protein>
    <recommendedName>
        <fullName evidence="1">Envelope glycoprotein M</fullName>
        <shortName evidence="1">gM</shortName>
    </recommendedName>
</protein>
<keyword id="KW-1015">Disulfide bond</keyword>
<keyword id="KW-0325">Glycoprotein</keyword>
<keyword id="KW-1039">Host endosome</keyword>
<keyword id="KW-1040">Host Golgi apparatus</keyword>
<keyword id="KW-1043">Host membrane</keyword>
<keyword id="KW-1048">Host nucleus</keyword>
<keyword id="KW-0472">Membrane</keyword>
<keyword id="KW-1185">Reference proteome</keyword>
<keyword id="KW-0812">Transmembrane</keyword>
<keyword id="KW-1133">Transmembrane helix</keyword>
<keyword id="KW-0261">Viral envelope protein</keyword>
<keyword id="KW-0946">Virion</keyword>